<accession>O28050</accession>
<sequence length="741" mass="84854">MMRQGGVMVGARKRWITDWWPNRLNLKILRQNLQNPYGEDYDYVEEVENLDIDAVIRDLKELMRSSQDWWPADFGHYGPLFIRLAWHSAGSYRIFDGRGGARDGSIRFPPRINWPDNINLDKAIRLLWPIKKKYGRKLSWADLIILAGTVAMEDMGVKLFGFALGREDIFEPDESPDWGPEEEMLTAKRGEKEELERPFAATEMGLIYVNPEGPGGNPDPLGSAQEIRVAFRRMGMNDEETVALIAGGHAFGKCHGAGPADYLGPDPSSSPIEMQGLGWKYNYGKGKGSDTFTSGLEVTWSPTPTKFGINYLRILFTYEWELEKSPAGKNQWVAKDAPEIIPDAHDPNKKHRPRMLTADLALRFDPEFSKIARRFLENPEEFEKAFAIAWYKLTHRDMGPKDCYIGKYVPEETFVWQDPLPRRDYELVDEKDVEELKRRILASGLSLSQLVYFAWASASTYRNSDRRGGANGARIRLKPMSVWEVNHPEELKKVIAAYEKIQQEFNEGAKGSEKRISIADLIVLGGIAAVEEAARRAGFSVKVPFIPGRVDAQQEHVDEEFYRVIEPFADGFRNYFRYPERINERDVYTTPEYFLVDKANLLTLTVPEMVVLIGGMRALGANYSHSDYGVLTERPGVLSNDFFVNLLDMSVEWRAADDYRYTFEGYDRKSGELRWRATRVDLILGHHDELRAVAEVYGCDDAKEKFVKDFAAVCAKVMHLDRFDLWRSNRKLYKEITAGLR</sequence>
<comment type="function">
    <text>Bifunctional enzyme with both catalase and broad-spectrum peroxidase activity. Also displays NADH oxidase, INH lyase and isonicotinoyl-NAD synthase activities.</text>
</comment>
<comment type="catalytic activity">
    <reaction evidence="1">
        <text>H2O2 + AH2 = A + 2 H2O</text>
        <dbReference type="Rhea" id="RHEA:30275"/>
        <dbReference type="ChEBI" id="CHEBI:13193"/>
        <dbReference type="ChEBI" id="CHEBI:15377"/>
        <dbReference type="ChEBI" id="CHEBI:16240"/>
        <dbReference type="ChEBI" id="CHEBI:17499"/>
        <dbReference type="EC" id="1.11.1.21"/>
    </reaction>
</comment>
<comment type="catalytic activity">
    <reaction evidence="1">
        <text>2 H2O2 = O2 + 2 H2O</text>
        <dbReference type="Rhea" id="RHEA:20309"/>
        <dbReference type="ChEBI" id="CHEBI:15377"/>
        <dbReference type="ChEBI" id="CHEBI:15379"/>
        <dbReference type="ChEBI" id="CHEBI:16240"/>
        <dbReference type="EC" id="1.11.1.21"/>
    </reaction>
</comment>
<comment type="cofactor">
    <cofactor evidence="1">
        <name>heme b</name>
        <dbReference type="ChEBI" id="CHEBI:60344"/>
    </cofactor>
    <text evidence="1">Binds 1 heme b (iron(II)-protoporphyrin IX) group per dimer.</text>
</comment>
<comment type="biophysicochemical properties">
    <kinetics>
        <KM evidence="2">32 mM for H(2)O(2) for the catalase reaction (at pH 5.5-6.0)</KM>
        <KM evidence="2">3.8 mM for H(2)O(2) for the catalase reaction (at pH 7.0)</KM>
        <KM evidence="2">95 mM for H(2)O(2) for the peroxidase reaction</KM>
        <KM evidence="2">16 mM for ABTS for the peroxidase reaction</KM>
        <Vmax evidence="2">11760.0 umol/min/mg enzyme for H(2)O(2) for the catalase reaction (at pH 5.5-6.0)</Vmax>
        <Vmax evidence="2">5500.0 umol/min/mg enzyme for H(2)O(2) for the catalase reaction (at pH 7.0)</Vmax>
        <Vmax evidence="2">12.0 umol/min/mg enzyme for ABTS for the peroxidase reaction</Vmax>
    </kinetics>
    <phDependence>
        <text evidence="2">Optimum pH is 4.5 for the peroxidase reaction.</text>
    </phDependence>
</comment>
<comment type="subunit">
    <text evidence="1">Homodimer or homotetramer.</text>
</comment>
<comment type="PTM">
    <text evidence="1">Formation of the three residue Trp-Tyr-Met cross-link is important for the catalase, but not the peroxidase activity of the enzyme.</text>
</comment>
<comment type="similarity">
    <text evidence="1">Belongs to the peroxidase family. Peroxidase/catalase subfamily.</text>
</comment>
<evidence type="ECO:0000255" key="1">
    <source>
        <dbReference type="HAMAP-Rule" id="MF_01961"/>
    </source>
</evidence>
<evidence type="ECO:0000269" key="2">
    <source>
    </source>
</evidence>
<name>KATG_ARCFU</name>
<organism>
    <name type="scientific">Archaeoglobus fulgidus (strain ATCC 49558 / DSM 4304 / JCM 9628 / NBRC 100126 / VC-16)</name>
    <dbReference type="NCBI Taxonomy" id="224325"/>
    <lineage>
        <taxon>Archaea</taxon>
        <taxon>Methanobacteriati</taxon>
        <taxon>Methanobacteriota</taxon>
        <taxon>Archaeoglobi</taxon>
        <taxon>Archaeoglobales</taxon>
        <taxon>Archaeoglobaceae</taxon>
        <taxon>Archaeoglobus</taxon>
    </lineage>
</organism>
<reference key="1">
    <citation type="journal article" date="1997" name="Nature">
        <title>The complete genome sequence of the hyperthermophilic, sulphate-reducing archaeon Archaeoglobus fulgidus.</title>
        <authorList>
            <person name="Klenk H.-P."/>
            <person name="Clayton R.A."/>
            <person name="Tomb J.-F."/>
            <person name="White O."/>
            <person name="Nelson K.E."/>
            <person name="Ketchum K.A."/>
            <person name="Dodson R.J."/>
            <person name="Gwinn M.L."/>
            <person name="Hickey E.K."/>
            <person name="Peterson J.D."/>
            <person name="Richardson D.L."/>
            <person name="Kerlavage A.R."/>
            <person name="Graham D.E."/>
            <person name="Kyrpides N.C."/>
            <person name="Fleischmann R.D."/>
            <person name="Quackenbush J."/>
            <person name="Lee N.H."/>
            <person name="Sutton G.G."/>
            <person name="Gill S.R."/>
            <person name="Kirkness E.F."/>
            <person name="Dougherty B.A."/>
            <person name="McKenney K."/>
            <person name="Adams M.D."/>
            <person name="Loftus B.J."/>
            <person name="Peterson S.N."/>
            <person name="Reich C.I."/>
            <person name="McNeil L.K."/>
            <person name="Badger J.H."/>
            <person name="Glodek A."/>
            <person name="Zhou L."/>
            <person name="Overbeek R."/>
            <person name="Gocayne J.D."/>
            <person name="Weidman J.F."/>
            <person name="McDonald L.A."/>
            <person name="Utterback T.R."/>
            <person name="Cotton M.D."/>
            <person name="Spriggs T."/>
            <person name="Artiach P."/>
            <person name="Kaine B.P."/>
            <person name="Sykes S.M."/>
            <person name="Sadow P.W."/>
            <person name="D'Andrea K.P."/>
            <person name="Bowman C."/>
            <person name="Fujii C."/>
            <person name="Garland S.A."/>
            <person name="Mason T.M."/>
            <person name="Olsen G.J."/>
            <person name="Fraser C.M."/>
            <person name="Smith H.O."/>
            <person name="Woese C.R."/>
            <person name="Venter J.C."/>
        </authorList>
    </citation>
    <scope>NUCLEOTIDE SEQUENCE [LARGE SCALE GENOMIC DNA]</scope>
    <source>
        <strain>ATCC 49558 / DSM 4304 / JCM 9628 / NBRC 100126 / VC-16</strain>
    </source>
</reference>
<reference key="2">
    <citation type="journal article" date="2008" name="Arch. Biochem. Biophys.">
        <title>Comparative study of catalase-peroxidases (KatGs).</title>
        <authorList>
            <person name="Singh R."/>
            <person name="Wiseman B."/>
            <person name="Deemagarn T."/>
            <person name="Jha V."/>
            <person name="Switala J."/>
            <person name="Loewen P.C."/>
        </authorList>
    </citation>
    <scope>BIOPHYSICOCHEMICAL PROPERTIES</scope>
</reference>
<proteinExistence type="evidence at protein level"/>
<gene>
    <name evidence="1" type="primary">katG</name>
    <name type="synonym">perA</name>
    <name type="ordered locus">AF_2233</name>
</gene>
<feature type="chain" id="PRO_0000055579" description="Catalase-peroxidase">
    <location>
        <begin position="1"/>
        <end position="741"/>
    </location>
</feature>
<feature type="active site" description="Proton acceptor" evidence="1">
    <location>
        <position position="87"/>
    </location>
</feature>
<feature type="binding site" description="axial binding residue" evidence="1">
    <location>
        <position position="249"/>
    </location>
    <ligand>
        <name>heme b</name>
        <dbReference type="ChEBI" id="CHEBI:60344"/>
    </ligand>
    <ligandPart>
        <name>Fe</name>
        <dbReference type="ChEBI" id="CHEBI:18248"/>
    </ligandPart>
</feature>
<feature type="site" description="Transition state stabilizer" evidence="1">
    <location>
        <position position="83"/>
    </location>
</feature>
<feature type="cross-link" description="Tryptophyl-tyrosyl-methioninium (Trp-Tyr) (with M-234)" evidence="1">
    <location>
        <begin position="86"/>
        <end position="208"/>
    </location>
</feature>
<feature type="cross-link" description="Tryptophyl-tyrosyl-methioninium (Tyr-Met) (with W-86)" evidence="1">
    <location>
        <begin position="208"/>
        <end position="234"/>
    </location>
</feature>
<keyword id="KW-0349">Heme</keyword>
<keyword id="KW-0376">Hydrogen peroxide</keyword>
<keyword id="KW-0408">Iron</keyword>
<keyword id="KW-0479">Metal-binding</keyword>
<keyword id="KW-0560">Oxidoreductase</keyword>
<keyword id="KW-0575">Peroxidase</keyword>
<keyword id="KW-1185">Reference proteome</keyword>
<dbReference type="EC" id="1.11.1.21" evidence="1"/>
<dbReference type="EMBL" id="AE000782">
    <property type="protein sequence ID" value="AAB89022.1"/>
    <property type="molecule type" value="Genomic_DNA"/>
</dbReference>
<dbReference type="PIR" id="A69529">
    <property type="entry name" value="A69529"/>
</dbReference>
<dbReference type="RefSeq" id="WP_010879722.1">
    <property type="nucleotide sequence ID" value="NC_000917.1"/>
</dbReference>
<dbReference type="SMR" id="O28050"/>
<dbReference type="STRING" id="224325.AF_2233"/>
<dbReference type="PeroxiBase" id="1858">
    <property type="entry name" value="AfCP01"/>
</dbReference>
<dbReference type="PaxDb" id="224325-AF_2233"/>
<dbReference type="EnsemblBacteria" id="AAB89022">
    <property type="protein sequence ID" value="AAB89022"/>
    <property type="gene ID" value="AF_2233"/>
</dbReference>
<dbReference type="GeneID" id="24795995"/>
<dbReference type="KEGG" id="afu:AF_2233"/>
<dbReference type="eggNOG" id="arCOG04487">
    <property type="taxonomic scope" value="Archaea"/>
</dbReference>
<dbReference type="HOGENOM" id="CLU_025424_2_0_2"/>
<dbReference type="OrthoDB" id="358790at2157"/>
<dbReference type="PhylomeDB" id="O28050"/>
<dbReference type="BRENDA" id="1.11.1.21">
    <property type="organism ID" value="414"/>
</dbReference>
<dbReference type="Proteomes" id="UP000002199">
    <property type="component" value="Chromosome"/>
</dbReference>
<dbReference type="GO" id="GO:0005829">
    <property type="term" value="C:cytosol"/>
    <property type="evidence" value="ECO:0007669"/>
    <property type="project" value="TreeGrafter"/>
</dbReference>
<dbReference type="GO" id="GO:0004096">
    <property type="term" value="F:catalase activity"/>
    <property type="evidence" value="ECO:0007669"/>
    <property type="project" value="UniProtKB-UniRule"/>
</dbReference>
<dbReference type="GO" id="GO:0020037">
    <property type="term" value="F:heme binding"/>
    <property type="evidence" value="ECO:0007669"/>
    <property type="project" value="InterPro"/>
</dbReference>
<dbReference type="GO" id="GO:0046872">
    <property type="term" value="F:metal ion binding"/>
    <property type="evidence" value="ECO:0007669"/>
    <property type="project" value="UniProtKB-KW"/>
</dbReference>
<dbReference type="GO" id="GO:0070301">
    <property type="term" value="P:cellular response to hydrogen peroxide"/>
    <property type="evidence" value="ECO:0007669"/>
    <property type="project" value="TreeGrafter"/>
</dbReference>
<dbReference type="GO" id="GO:0042744">
    <property type="term" value="P:hydrogen peroxide catabolic process"/>
    <property type="evidence" value="ECO:0007669"/>
    <property type="project" value="UniProtKB-KW"/>
</dbReference>
<dbReference type="CDD" id="cd00649">
    <property type="entry name" value="catalase_peroxidase_1"/>
    <property type="match status" value="1"/>
</dbReference>
<dbReference type="CDD" id="cd08200">
    <property type="entry name" value="catalase_peroxidase_2"/>
    <property type="match status" value="1"/>
</dbReference>
<dbReference type="FunFam" id="1.10.420.10:FF:000002">
    <property type="entry name" value="Catalase-peroxidase"/>
    <property type="match status" value="1"/>
</dbReference>
<dbReference type="FunFam" id="1.10.420.10:FF:000004">
    <property type="entry name" value="Catalase-peroxidase"/>
    <property type="match status" value="1"/>
</dbReference>
<dbReference type="Gene3D" id="1.10.520.10">
    <property type="match status" value="2"/>
</dbReference>
<dbReference type="Gene3D" id="1.10.420.10">
    <property type="entry name" value="Peroxidase, domain 2"/>
    <property type="match status" value="2"/>
</dbReference>
<dbReference type="HAMAP" id="MF_01961">
    <property type="entry name" value="Catal_peroxid"/>
    <property type="match status" value="1"/>
</dbReference>
<dbReference type="InterPro" id="IPR000763">
    <property type="entry name" value="Catalase_peroxidase"/>
</dbReference>
<dbReference type="InterPro" id="IPR002016">
    <property type="entry name" value="Haem_peroxidase"/>
</dbReference>
<dbReference type="InterPro" id="IPR010255">
    <property type="entry name" value="Haem_peroxidase_sf"/>
</dbReference>
<dbReference type="InterPro" id="IPR019794">
    <property type="entry name" value="Peroxidases_AS"/>
</dbReference>
<dbReference type="InterPro" id="IPR019793">
    <property type="entry name" value="Peroxidases_heam-ligand_BS"/>
</dbReference>
<dbReference type="NCBIfam" id="TIGR00198">
    <property type="entry name" value="cat_per_HPI"/>
    <property type="match status" value="1"/>
</dbReference>
<dbReference type="NCBIfam" id="NF011635">
    <property type="entry name" value="PRK15061.1"/>
    <property type="match status" value="1"/>
</dbReference>
<dbReference type="PANTHER" id="PTHR30555:SF0">
    <property type="entry name" value="CATALASE-PEROXIDASE"/>
    <property type="match status" value="1"/>
</dbReference>
<dbReference type="PANTHER" id="PTHR30555">
    <property type="entry name" value="HYDROPEROXIDASE I, BIFUNCTIONAL CATALASE-PEROXIDASE"/>
    <property type="match status" value="1"/>
</dbReference>
<dbReference type="Pfam" id="PF00141">
    <property type="entry name" value="peroxidase"/>
    <property type="match status" value="2"/>
</dbReference>
<dbReference type="PRINTS" id="PR00460">
    <property type="entry name" value="BPEROXIDASE"/>
</dbReference>
<dbReference type="PRINTS" id="PR00458">
    <property type="entry name" value="PEROXIDASE"/>
</dbReference>
<dbReference type="SUPFAM" id="SSF48113">
    <property type="entry name" value="Heme-dependent peroxidases"/>
    <property type="match status" value="2"/>
</dbReference>
<dbReference type="PROSITE" id="PS00435">
    <property type="entry name" value="PEROXIDASE_1"/>
    <property type="match status" value="1"/>
</dbReference>
<dbReference type="PROSITE" id="PS00436">
    <property type="entry name" value="PEROXIDASE_2"/>
    <property type="match status" value="1"/>
</dbReference>
<dbReference type="PROSITE" id="PS50873">
    <property type="entry name" value="PEROXIDASE_4"/>
    <property type="match status" value="1"/>
</dbReference>
<protein>
    <recommendedName>
        <fullName evidence="1">Catalase-peroxidase</fullName>
        <shortName evidence="1">CP</shortName>
        <ecNumber evidence="1">1.11.1.21</ecNumber>
    </recommendedName>
    <alternativeName>
        <fullName evidence="1">Peroxidase/catalase</fullName>
    </alternativeName>
</protein>